<sequence length="269" mass="28929">MRSPAALLPVVADGGGGVGVEEEMDVDEDMAMCGGRGGGGGEKKRRLSVEQVRALERSFETENKLEPERKARLARDLGLQPRQVAVWFQNRRARWKTKQLERDYAALRQSYDALRADHDALRRDKDALLAEIKELKGKLGDEDAAASFSSVKEEEDPAASDADPPATGAPQGSSESDSSAVLNDAEILPHKPAPAAAADAAASEETEAVVTGAALLHHAEVFFHGQLLKVDDDEAAFLGDDGAACGGFFADEHLPSLPWWAEPTEQWTT</sequence>
<organism>
    <name type="scientific">Oryza sativa subsp. japonica</name>
    <name type="common">Rice</name>
    <dbReference type="NCBI Taxonomy" id="39947"/>
    <lineage>
        <taxon>Eukaryota</taxon>
        <taxon>Viridiplantae</taxon>
        <taxon>Streptophyta</taxon>
        <taxon>Embryophyta</taxon>
        <taxon>Tracheophyta</taxon>
        <taxon>Spermatophyta</taxon>
        <taxon>Magnoliopsida</taxon>
        <taxon>Liliopsida</taxon>
        <taxon>Poales</taxon>
        <taxon>Poaceae</taxon>
        <taxon>BOP clade</taxon>
        <taxon>Oryzoideae</taxon>
        <taxon>Oryzeae</taxon>
        <taxon>Oryzinae</taxon>
        <taxon>Oryza</taxon>
        <taxon>Oryza sativa</taxon>
    </lineage>
</organism>
<dbReference type="EMBL" id="AP005391">
    <property type="protein sequence ID" value="BAD10283.1"/>
    <property type="molecule type" value="Genomic_DNA"/>
</dbReference>
<dbReference type="EMBL" id="AP008214">
    <property type="protein sequence ID" value="BAF23978.1"/>
    <property type="molecule type" value="Genomic_DNA"/>
</dbReference>
<dbReference type="EMBL" id="AP014964">
    <property type="protein sequence ID" value="BAT05928.1"/>
    <property type="molecule type" value="Genomic_DNA"/>
</dbReference>
<dbReference type="EMBL" id="AK068244">
    <property type="protein sequence ID" value="BAG90822.1"/>
    <property type="molecule type" value="mRNA"/>
</dbReference>
<dbReference type="EMBL" id="AK106818">
    <property type="protein sequence ID" value="BAG97844.1"/>
    <property type="molecule type" value="mRNA"/>
</dbReference>
<dbReference type="RefSeq" id="XP_015650851.1">
    <property type="nucleotide sequence ID" value="XM_015795365.1"/>
</dbReference>
<dbReference type="SMR" id="Q6Z248"/>
<dbReference type="FunCoup" id="Q6Z248">
    <property type="interactions" value="273"/>
</dbReference>
<dbReference type="STRING" id="39947.Q6Z248"/>
<dbReference type="PaxDb" id="39947-Q6Z248"/>
<dbReference type="EnsemblPlants" id="Os08t0481400-01">
    <property type="protein sequence ID" value="Os08t0481400-01"/>
    <property type="gene ID" value="Os08g0481400"/>
</dbReference>
<dbReference type="Gramene" id="Os08t0481400-01">
    <property type="protein sequence ID" value="Os08t0481400-01"/>
    <property type="gene ID" value="Os08g0481400"/>
</dbReference>
<dbReference type="KEGG" id="dosa:Os08g0481400"/>
<dbReference type="eggNOG" id="KOG0483">
    <property type="taxonomic scope" value="Eukaryota"/>
</dbReference>
<dbReference type="HOGENOM" id="CLU_060842_1_0_1"/>
<dbReference type="InParanoid" id="Q6Z248"/>
<dbReference type="OMA" id="MAPEKAH"/>
<dbReference type="OrthoDB" id="6159439at2759"/>
<dbReference type="Proteomes" id="UP000000763">
    <property type="component" value="Chromosome 8"/>
</dbReference>
<dbReference type="Proteomes" id="UP000059680">
    <property type="component" value="Chromosome 8"/>
</dbReference>
<dbReference type="GO" id="GO:0005634">
    <property type="term" value="C:nucleus"/>
    <property type="evidence" value="ECO:0000318"/>
    <property type="project" value="GO_Central"/>
</dbReference>
<dbReference type="GO" id="GO:0000981">
    <property type="term" value="F:DNA-binding transcription factor activity, RNA polymerase II-specific"/>
    <property type="evidence" value="ECO:0007669"/>
    <property type="project" value="InterPro"/>
</dbReference>
<dbReference type="GO" id="GO:0043565">
    <property type="term" value="F:sequence-specific DNA binding"/>
    <property type="evidence" value="ECO:0000318"/>
    <property type="project" value="GO_Central"/>
</dbReference>
<dbReference type="GO" id="GO:0045893">
    <property type="term" value="P:positive regulation of DNA-templated transcription"/>
    <property type="evidence" value="ECO:0000318"/>
    <property type="project" value="GO_Central"/>
</dbReference>
<dbReference type="CDD" id="cd00086">
    <property type="entry name" value="homeodomain"/>
    <property type="match status" value="1"/>
</dbReference>
<dbReference type="FunFam" id="1.10.10.60:FF:000242">
    <property type="entry name" value="Homeobox-leucine zipper protein HOX13"/>
    <property type="match status" value="1"/>
</dbReference>
<dbReference type="Gene3D" id="1.10.10.60">
    <property type="entry name" value="Homeodomain-like"/>
    <property type="match status" value="1"/>
</dbReference>
<dbReference type="InterPro" id="IPR001356">
    <property type="entry name" value="HD"/>
</dbReference>
<dbReference type="InterPro" id="IPR045224">
    <property type="entry name" value="HDZip_class_I_plant"/>
</dbReference>
<dbReference type="InterPro" id="IPR017970">
    <property type="entry name" value="Homeobox_CS"/>
</dbReference>
<dbReference type="InterPro" id="IPR009057">
    <property type="entry name" value="Homeodomain-like_sf"/>
</dbReference>
<dbReference type="InterPro" id="IPR000047">
    <property type="entry name" value="HTH_motif"/>
</dbReference>
<dbReference type="InterPro" id="IPR003106">
    <property type="entry name" value="Leu_zip_homeo"/>
</dbReference>
<dbReference type="PANTHER" id="PTHR24326">
    <property type="entry name" value="HOMEOBOX-LEUCINE ZIPPER PROTEIN"/>
    <property type="match status" value="1"/>
</dbReference>
<dbReference type="PANTHER" id="PTHR24326:SF624">
    <property type="entry name" value="HOMEOBOX-LEUCINE ZIPPER PROTEIN HOX20"/>
    <property type="match status" value="1"/>
</dbReference>
<dbReference type="Pfam" id="PF02183">
    <property type="entry name" value="HALZ"/>
    <property type="match status" value="1"/>
</dbReference>
<dbReference type="Pfam" id="PF00046">
    <property type="entry name" value="Homeodomain"/>
    <property type="match status" value="1"/>
</dbReference>
<dbReference type="PRINTS" id="PR00031">
    <property type="entry name" value="HTHREPRESSR"/>
</dbReference>
<dbReference type="SMART" id="SM00389">
    <property type="entry name" value="HOX"/>
    <property type="match status" value="1"/>
</dbReference>
<dbReference type="SUPFAM" id="SSF46689">
    <property type="entry name" value="Homeodomain-like"/>
    <property type="match status" value="1"/>
</dbReference>
<dbReference type="PROSITE" id="PS00027">
    <property type="entry name" value="HOMEOBOX_1"/>
    <property type="match status" value="1"/>
</dbReference>
<dbReference type="PROSITE" id="PS50071">
    <property type="entry name" value="HOMEOBOX_2"/>
    <property type="match status" value="1"/>
</dbReference>
<gene>
    <name type="primary">HOX20</name>
    <name type="ordered locus">Os08g0481400</name>
    <name type="ordered locus">LOC_Os08g37580</name>
    <name type="ORF">OSJNBb0092C08.26</name>
</gene>
<feature type="chain" id="PRO_0000331713" description="Homeobox-leucine zipper protein HOX20">
    <location>
        <begin position="1"/>
        <end position="269"/>
    </location>
</feature>
<feature type="DNA-binding region" description="Homeobox" evidence="2">
    <location>
        <begin position="40"/>
        <end position="99"/>
    </location>
</feature>
<feature type="region of interest" description="Leucine-zipper">
    <location>
        <begin position="98"/>
        <end position="142"/>
    </location>
</feature>
<feature type="region of interest" description="Disordered" evidence="3">
    <location>
        <begin position="143"/>
        <end position="180"/>
    </location>
</feature>
<feature type="compositionally biased region" description="Polar residues" evidence="3">
    <location>
        <begin position="170"/>
        <end position="180"/>
    </location>
</feature>
<proteinExistence type="evidence at transcript level"/>
<evidence type="ECO:0000250" key="1"/>
<evidence type="ECO:0000255" key="2">
    <source>
        <dbReference type="PROSITE-ProRule" id="PRU00108"/>
    </source>
</evidence>
<evidence type="ECO:0000256" key="3">
    <source>
        <dbReference type="SAM" id="MobiDB-lite"/>
    </source>
</evidence>
<evidence type="ECO:0000269" key="4">
    <source>
    </source>
</evidence>
<evidence type="ECO:0000305" key="5"/>
<reference key="1">
    <citation type="journal article" date="2005" name="Nature">
        <title>The map-based sequence of the rice genome.</title>
        <authorList>
            <consortium name="International rice genome sequencing project (IRGSP)"/>
        </authorList>
    </citation>
    <scope>NUCLEOTIDE SEQUENCE [LARGE SCALE GENOMIC DNA]</scope>
    <source>
        <strain>cv. Nipponbare</strain>
    </source>
</reference>
<reference key="2">
    <citation type="journal article" date="2008" name="Nucleic Acids Res.">
        <title>The rice annotation project database (RAP-DB): 2008 update.</title>
        <authorList>
            <consortium name="The rice annotation project (RAP)"/>
        </authorList>
    </citation>
    <scope>GENOME REANNOTATION</scope>
    <source>
        <strain>cv. Nipponbare</strain>
    </source>
</reference>
<reference key="3">
    <citation type="journal article" date="2013" name="Rice">
        <title>Improvement of the Oryza sativa Nipponbare reference genome using next generation sequence and optical map data.</title>
        <authorList>
            <person name="Kawahara Y."/>
            <person name="de la Bastide M."/>
            <person name="Hamilton J.P."/>
            <person name="Kanamori H."/>
            <person name="McCombie W.R."/>
            <person name="Ouyang S."/>
            <person name="Schwartz D.C."/>
            <person name="Tanaka T."/>
            <person name="Wu J."/>
            <person name="Zhou S."/>
            <person name="Childs K.L."/>
            <person name="Davidson R.M."/>
            <person name="Lin H."/>
            <person name="Quesada-Ocampo L."/>
            <person name="Vaillancourt B."/>
            <person name="Sakai H."/>
            <person name="Lee S.S."/>
            <person name="Kim J."/>
            <person name="Numa H."/>
            <person name="Itoh T."/>
            <person name="Buell C.R."/>
            <person name="Matsumoto T."/>
        </authorList>
    </citation>
    <scope>GENOME REANNOTATION</scope>
    <source>
        <strain>cv. Nipponbare</strain>
    </source>
</reference>
<reference key="4">
    <citation type="journal article" date="2003" name="Science">
        <title>Collection, mapping, and annotation of over 28,000 cDNA clones from japonica rice.</title>
        <authorList>
            <consortium name="The rice full-length cDNA consortium"/>
        </authorList>
    </citation>
    <scope>NUCLEOTIDE SEQUENCE [LARGE SCALE MRNA]</scope>
    <source>
        <strain>cv. Nipponbare</strain>
    </source>
</reference>
<reference key="5">
    <citation type="journal article" date="2008" name="Plant Mol. Biol.">
        <title>A genome-wide survey of HD-Zip genes in rice and analysis of drought-responsive family members.</title>
        <authorList>
            <person name="Agalou A."/>
            <person name="Purwantomo S."/>
            <person name="Oevernaes E."/>
            <person name="Johannesson H."/>
            <person name="Zhu X."/>
            <person name="Estiati A."/>
            <person name="de Kam R.J."/>
            <person name="Engstroem P."/>
            <person name="Slamet-Loedin I.H."/>
            <person name="Zhu Z."/>
            <person name="Wang M."/>
            <person name="Xiong L."/>
            <person name="Meijer A.H."/>
            <person name="Ouwerkerk P.B.F."/>
        </authorList>
    </citation>
    <scope>TISSUE SPECIFICITY</scope>
    <scope>GENE FAMILY</scope>
    <scope>NOMENCLATURE</scope>
</reference>
<comment type="function">
    <text evidence="1">Probable transcription factor.</text>
</comment>
<comment type="subcellular location">
    <subcellularLocation>
        <location evidence="5">Nucleus</location>
    </subcellularLocation>
</comment>
<comment type="tissue specificity">
    <text evidence="4">Expressed in leaf blades and panicles.</text>
</comment>
<comment type="similarity">
    <text evidence="5">Belongs to the HD-ZIP homeobox family. Class I subfamily.</text>
</comment>
<accession>Q6Z248</accession>
<accession>B7EEM5</accession>
<keyword id="KW-0238">DNA-binding</keyword>
<keyword id="KW-0371">Homeobox</keyword>
<keyword id="KW-0539">Nucleus</keyword>
<keyword id="KW-1185">Reference proteome</keyword>
<keyword id="KW-0804">Transcription</keyword>
<keyword id="KW-0805">Transcription regulation</keyword>
<protein>
    <recommendedName>
        <fullName>Homeobox-leucine zipper protein HOX20</fullName>
    </recommendedName>
    <alternativeName>
        <fullName>HD-ZIP protein HOX20</fullName>
    </alternativeName>
    <alternativeName>
        <fullName>Homeodomain transcription factor HOX20</fullName>
    </alternativeName>
    <alternativeName>
        <fullName>OsHox20</fullName>
    </alternativeName>
</protein>
<name>HOX20_ORYSJ</name>